<feature type="chain" id="PRO_1000195622" description="Large ribosomal subunit protein uL11">
    <location>
        <begin position="1"/>
        <end position="140"/>
    </location>
</feature>
<dbReference type="EMBL" id="CP001197">
    <property type="protein sequence ID" value="ACL08399.1"/>
    <property type="molecule type" value="Genomic_DNA"/>
</dbReference>
<dbReference type="SMR" id="B8DLM3"/>
<dbReference type="STRING" id="883.DvMF_1451"/>
<dbReference type="KEGG" id="dvm:DvMF_1451"/>
<dbReference type="eggNOG" id="COG0080">
    <property type="taxonomic scope" value="Bacteria"/>
</dbReference>
<dbReference type="HOGENOM" id="CLU_074237_2_0_7"/>
<dbReference type="OrthoDB" id="9802408at2"/>
<dbReference type="GO" id="GO:0022625">
    <property type="term" value="C:cytosolic large ribosomal subunit"/>
    <property type="evidence" value="ECO:0007669"/>
    <property type="project" value="TreeGrafter"/>
</dbReference>
<dbReference type="GO" id="GO:0070180">
    <property type="term" value="F:large ribosomal subunit rRNA binding"/>
    <property type="evidence" value="ECO:0007669"/>
    <property type="project" value="UniProtKB-UniRule"/>
</dbReference>
<dbReference type="GO" id="GO:0003735">
    <property type="term" value="F:structural constituent of ribosome"/>
    <property type="evidence" value="ECO:0007669"/>
    <property type="project" value="InterPro"/>
</dbReference>
<dbReference type="GO" id="GO:0006412">
    <property type="term" value="P:translation"/>
    <property type="evidence" value="ECO:0007669"/>
    <property type="project" value="UniProtKB-UniRule"/>
</dbReference>
<dbReference type="CDD" id="cd00349">
    <property type="entry name" value="Ribosomal_L11"/>
    <property type="match status" value="1"/>
</dbReference>
<dbReference type="FunFam" id="1.10.10.250:FF:000001">
    <property type="entry name" value="50S ribosomal protein L11"/>
    <property type="match status" value="1"/>
</dbReference>
<dbReference type="FunFam" id="3.30.1550.10:FF:000001">
    <property type="entry name" value="50S ribosomal protein L11"/>
    <property type="match status" value="1"/>
</dbReference>
<dbReference type="Gene3D" id="1.10.10.250">
    <property type="entry name" value="Ribosomal protein L11, C-terminal domain"/>
    <property type="match status" value="1"/>
</dbReference>
<dbReference type="Gene3D" id="3.30.1550.10">
    <property type="entry name" value="Ribosomal protein L11/L12, N-terminal domain"/>
    <property type="match status" value="1"/>
</dbReference>
<dbReference type="HAMAP" id="MF_00736">
    <property type="entry name" value="Ribosomal_uL11"/>
    <property type="match status" value="1"/>
</dbReference>
<dbReference type="InterPro" id="IPR000911">
    <property type="entry name" value="Ribosomal_uL11"/>
</dbReference>
<dbReference type="InterPro" id="IPR006519">
    <property type="entry name" value="Ribosomal_uL11_bac-typ"/>
</dbReference>
<dbReference type="InterPro" id="IPR020783">
    <property type="entry name" value="Ribosomal_uL11_C"/>
</dbReference>
<dbReference type="InterPro" id="IPR036769">
    <property type="entry name" value="Ribosomal_uL11_C_sf"/>
</dbReference>
<dbReference type="InterPro" id="IPR020784">
    <property type="entry name" value="Ribosomal_uL11_N"/>
</dbReference>
<dbReference type="InterPro" id="IPR036796">
    <property type="entry name" value="Ribosomal_uL11_N_sf"/>
</dbReference>
<dbReference type="NCBIfam" id="TIGR01632">
    <property type="entry name" value="L11_bact"/>
    <property type="match status" value="1"/>
</dbReference>
<dbReference type="PANTHER" id="PTHR11661">
    <property type="entry name" value="60S RIBOSOMAL PROTEIN L12"/>
    <property type="match status" value="1"/>
</dbReference>
<dbReference type="PANTHER" id="PTHR11661:SF1">
    <property type="entry name" value="LARGE RIBOSOMAL SUBUNIT PROTEIN UL11M"/>
    <property type="match status" value="1"/>
</dbReference>
<dbReference type="Pfam" id="PF00298">
    <property type="entry name" value="Ribosomal_L11"/>
    <property type="match status" value="1"/>
</dbReference>
<dbReference type="Pfam" id="PF03946">
    <property type="entry name" value="Ribosomal_L11_N"/>
    <property type="match status" value="1"/>
</dbReference>
<dbReference type="SMART" id="SM00649">
    <property type="entry name" value="RL11"/>
    <property type="match status" value="1"/>
</dbReference>
<dbReference type="SUPFAM" id="SSF54747">
    <property type="entry name" value="Ribosomal L11/L12e N-terminal domain"/>
    <property type="match status" value="1"/>
</dbReference>
<dbReference type="SUPFAM" id="SSF46906">
    <property type="entry name" value="Ribosomal protein L11, C-terminal domain"/>
    <property type="match status" value="1"/>
</dbReference>
<name>RL11_NITV9</name>
<organism>
    <name type="scientific">Nitratidesulfovibrio vulgaris (strain DSM 19637 / Miyazaki F)</name>
    <name type="common">Desulfovibrio vulgaris</name>
    <dbReference type="NCBI Taxonomy" id="883"/>
    <lineage>
        <taxon>Bacteria</taxon>
        <taxon>Pseudomonadati</taxon>
        <taxon>Thermodesulfobacteriota</taxon>
        <taxon>Desulfovibrionia</taxon>
        <taxon>Desulfovibrionales</taxon>
        <taxon>Desulfovibrionaceae</taxon>
        <taxon>Nitratidesulfovibrio</taxon>
    </lineage>
</organism>
<accession>B8DLM3</accession>
<protein>
    <recommendedName>
        <fullName evidence="1">Large ribosomal subunit protein uL11</fullName>
    </recommendedName>
    <alternativeName>
        <fullName evidence="2">50S ribosomal protein L11</fullName>
    </alternativeName>
</protein>
<comment type="function">
    <text evidence="1">Forms part of the ribosomal stalk which helps the ribosome interact with GTP-bound translation factors.</text>
</comment>
<comment type="subunit">
    <text evidence="1">Part of the ribosomal stalk of the 50S ribosomal subunit. Interacts with L10 and the large rRNA to form the base of the stalk. L10 forms an elongated spine to which L12 dimers bind in a sequential fashion forming a multimeric L10(L12)X complex.</text>
</comment>
<comment type="PTM">
    <text evidence="1">One or more lysine residues are methylated.</text>
</comment>
<comment type="similarity">
    <text evidence="1">Belongs to the universal ribosomal protein uL11 family.</text>
</comment>
<sequence length="140" mass="14891">MAKKEVAKIKLQIPAGAANPSPPVGPALGQHGLNIMEFCKTFNAKTMEQKGMITPVVITVYSDRSFTFITKTPPASVLLLKAAKLEKGSGEPNRNKVGSVSMAQVEEIAKLKLPDLTAKDLDAATRSVLGTARSMGIEIK</sequence>
<keyword id="KW-0488">Methylation</keyword>
<keyword id="KW-0687">Ribonucleoprotein</keyword>
<keyword id="KW-0689">Ribosomal protein</keyword>
<keyword id="KW-0694">RNA-binding</keyword>
<keyword id="KW-0699">rRNA-binding</keyword>
<evidence type="ECO:0000255" key="1">
    <source>
        <dbReference type="HAMAP-Rule" id="MF_00736"/>
    </source>
</evidence>
<evidence type="ECO:0000305" key="2"/>
<reference key="1">
    <citation type="submission" date="2008-10" db="EMBL/GenBank/DDBJ databases">
        <title>Complete sequence of Desulfovibrio vulgaris str. 'Miyazaki F'.</title>
        <authorList>
            <person name="Lucas S."/>
            <person name="Copeland A."/>
            <person name="Lapidus A."/>
            <person name="Glavina del Rio T."/>
            <person name="Dalin E."/>
            <person name="Tice H."/>
            <person name="Bruce D."/>
            <person name="Goodwin L."/>
            <person name="Pitluck S."/>
            <person name="Sims D."/>
            <person name="Brettin T."/>
            <person name="Detter J.C."/>
            <person name="Han C."/>
            <person name="Larimer F."/>
            <person name="Land M."/>
            <person name="Hauser L."/>
            <person name="Kyrpides N."/>
            <person name="Mikhailova N."/>
            <person name="Hazen T.C."/>
            <person name="Richardson P."/>
        </authorList>
    </citation>
    <scope>NUCLEOTIDE SEQUENCE [LARGE SCALE GENOMIC DNA]</scope>
    <source>
        <strain>DSM 19637 / Miyazaki F</strain>
    </source>
</reference>
<proteinExistence type="inferred from homology"/>
<gene>
    <name evidence="1" type="primary">rplK</name>
    <name type="ordered locus">DvMF_1451</name>
</gene>